<dbReference type="EMBL" id="L13696">
    <property type="protein sequence ID" value="AAA87963.1"/>
    <property type="molecule type" value="Genomic_DNA"/>
</dbReference>
<dbReference type="RefSeq" id="NP_040815.1">
    <property type="nucleotide sequence ID" value="NC_001447.1"/>
</dbReference>
<dbReference type="SMR" id="P42542"/>
<dbReference type="GeneID" id="1261011"/>
<dbReference type="KEGG" id="vg:1261011"/>
<dbReference type="Proteomes" id="UP000001573">
    <property type="component" value="Genome"/>
</dbReference>
<accession>P42542</accession>
<keyword id="KW-1185">Reference proteome</keyword>
<name>YO07_BPL2</name>
<reference key="1">
    <citation type="journal article" date="1994" name="Gene">
        <title>Sequence analysis of a unique temperature phage: mycoplasma virus L2.</title>
        <authorList>
            <person name="Maniloff J."/>
            <person name="Kampo G.J."/>
            <person name="Dascher C.C."/>
        </authorList>
    </citation>
    <scope>NUCLEOTIDE SEQUENCE [LARGE SCALE GENOMIC DNA]</scope>
</reference>
<proteinExistence type="predicted"/>
<organismHost>
    <name type="scientific">Mycoplasma</name>
    <dbReference type="NCBI Taxonomy" id="2093"/>
</organismHost>
<protein>
    <recommendedName>
        <fullName>Uncharacterized 14.0 kDa protein</fullName>
    </recommendedName>
    <alternativeName>
        <fullName>ORF7</fullName>
    </alternativeName>
</protein>
<organism>
    <name type="scientific">Acholeplasma phage L2</name>
    <name type="common">Bacteriophage L2</name>
    <dbReference type="NCBI Taxonomy" id="46014"/>
    <lineage>
        <taxon>Viruses</taxon>
        <taxon>Viruses incertae sedis</taxon>
        <taxon>Plasmaviridae</taxon>
        <taxon>Plasmavirus</taxon>
    </lineage>
</organism>
<sequence length="125" mass="14049">MICLFKINGKIASRKKITNAIYCLEQNQENEISELFETGSVDAQNIFNEGNADATIQIVELPNLDKATIKLALFSTLSCIGEDSPDGLPERYHQIFKRLGNELIDMDIDYDKVLSKLVKLAEVIQ</sequence>
<feature type="chain" id="PRO_0000066353" description="Uncharacterized 14.0 kDa protein">
    <location>
        <begin position="1"/>
        <end position="125"/>
    </location>
</feature>